<sequence length="122" mass="13406">MIQTESRLEVADNTGAREVLCIKVLGGSKRRYAGIGDIIKVSVKEATPRGRVKKGEIYNAVVVRTAKGVRRQDGSLIKFDGNAAVLLNNKLEPIGTRIFGPVTRELRSERFMKIVSLAPEVL</sequence>
<accession>Q39KF7</accession>
<proteinExistence type="inferred from homology"/>
<name>RL14_BURL3</name>
<protein>
    <recommendedName>
        <fullName evidence="1">Large ribosomal subunit protein uL14</fullName>
    </recommendedName>
    <alternativeName>
        <fullName evidence="2">50S ribosomal protein L14</fullName>
    </alternativeName>
</protein>
<feature type="chain" id="PRO_0000266464" description="Large ribosomal subunit protein uL14">
    <location>
        <begin position="1"/>
        <end position="122"/>
    </location>
</feature>
<comment type="function">
    <text evidence="1">Binds to 23S rRNA. Forms part of two intersubunit bridges in the 70S ribosome.</text>
</comment>
<comment type="subunit">
    <text evidence="1">Part of the 50S ribosomal subunit. Forms a cluster with proteins L3 and L19. In the 70S ribosome, L14 and L19 interact and together make contacts with the 16S rRNA in bridges B5 and B8.</text>
</comment>
<comment type="similarity">
    <text evidence="1">Belongs to the universal ribosomal protein uL14 family.</text>
</comment>
<dbReference type="EMBL" id="CP000151">
    <property type="protein sequence ID" value="ABB07059.1"/>
    <property type="molecule type" value="Genomic_DNA"/>
</dbReference>
<dbReference type="RefSeq" id="WP_006482918.1">
    <property type="nucleotide sequence ID" value="NZ_WNDV01000034.1"/>
</dbReference>
<dbReference type="SMR" id="Q39KF7"/>
<dbReference type="GeneID" id="93193441"/>
<dbReference type="KEGG" id="bur:Bcep18194_A3457"/>
<dbReference type="HOGENOM" id="CLU_095071_2_1_4"/>
<dbReference type="Proteomes" id="UP000002705">
    <property type="component" value="Chromosome 1"/>
</dbReference>
<dbReference type="GO" id="GO:0022625">
    <property type="term" value="C:cytosolic large ribosomal subunit"/>
    <property type="evidence" value="ECO:0007669"/>
    <property type="project" value="TreeGrafter"/>
</dbReference>
<dbReference type="GO" id="GO:0070180">
    <property type="term" value="F:large ribosomal subunit rRNA binding"/>
    <property type="evidence" value="ECO:0007669"/>
    <property type="project" value="TreeGrafter"/>
</dbReference>
<dbReference type="GO" id="GO:0003735">
    <property type="term" value="F:structural constituent of ribosome"/>
    <property type="evidence" value="ECO:0007669"/>
    <property type="project" value="InterPro"/>
</dbReference>
<dbReference type="GO" id="GO:0006412">
    <property type="term" value="P:translation"/>
    <property type="evidence" value="ECO:0007669"/>
    <property type="project" value="UniProtKB-UniRule"/>
</dbReference>
<dbReference type="CDD" id="cd00337">
    <property type="entry name" value="Ribosomal_uL14"/>
    <property type="match status" value="1"/>
</dbReference>
<dbReference type="FunFam" id="2.40.150.20:FF:000001">
    <property type="entry name" value="50S ribosomal protein L14"/>
    <property type="match status" value="1"/>
</dbReference>
<dbReference type="Gene3D" id="2.40.150.20">
    <property type="entry name" value="Ribosomal protein L14"/>
    <property type="match status" value="1"/>
</dbReference>
<dbReference type="HAMAP" id="MF_01367">
    <property type="entry name" value="Ribosomal_uL14"/>
    <property type="match status" value="1"/>
</dbReference>
<dbReference type="InterPro" id="IPR000218">
    <property type="entry name" value="Ribosomal_uL14"/>
</dbReference>
<dbReference type="InterPro" id="IPR005745">
    <property type="entry name" value="Ribosomal_uL14_bac-type"/>
</dbReference>
<dbReference type="InterPro" id="IPR019972">
    <property type="entry name" value="Ribosomal_uL14_CS"/>
</dbReference>
<dbReference type="InterPro" id="IPR036853">
    <property type="entry name" value="Ribosomal_uL14_sf"/>
</dbReference>
<dbReference type="NCBIfam" id="TIGR01067">
    <property type="entry name" value="rplN_bact"/>
    <property type="match status" value="1"/>
</dbReference>
<dbReference type="PANTHER" id="PTHR11761">
    <property type="entry name" value="50S/60S RIBOSOMAL PROTEIN L14/L23"/>
    <property type="match status" value="1"/>
</dbReference>
<dbReference type="PANTHER" id="PTHR11761:SF3">
    <property type="entry name" value="LARGE RIBOSOMAL SUBUNIT PROTEIN UL14M"/>
    <property type="match status" value="1"/>
</dbReference>
<dbReference type="Pfam" id="PF00238">
    <property type="entry name" value="Ribosomal_L14"/>
    <property type="match status" value="1"/>
</dbReference>
<dbReference type="SMART" id="SM01374">
    <property type="entry name" value="Ribosomal_L14"/>
    <property type="match status" value="1"/>
</dbReference>
<dbReference type="SUPFAM" id="SSF50193">
    <property type="entry name" value="Ribosomal protein L14"/>
    <property type="match status" value="1"/>
</dbReference>
<dbReference type="PROSITE" id="PS00049">
    <property type="entry name" value="RIBOSOMAL_L14"/>
    <property type="match status" value="1"/>
</dbReference>
<keyword id="KW-0687">Ribonucleoprotein</keyword>
<keyword id="KW-0689">Ribosomal protein</keyword>
<keyword id="KW-0694">RNA-binding</keyword>
<keyword id="KW-0699">rRNA-binding</keyword>
<evidence type="ECO:0000255" key="1">
    <source>
        <dbReference type="HAMAP-Rule" id="MF_01367"/>
    </source>
</evidence>
<evidence type="ECO:0000305" key="2"/>
<organism>
    <name type="scientific">Burkholderia lata (strain ATCC 17760 / DSM 23089 / LMG 22485 / NCIMB 9086 / R18194 / 383)</name>
    <dbReference type="NCBI Taxonomy" id="482957"/>
    <lineage>
        <taxon>Bacteria</taxon>
        <taxon>Pseudomonadati</taxon>
        <taxon>Pseudomonadota</taxon>
        <taxon>Betaproteobacteria</taxon>
        <taxon>Burkholderiales</taxon>
        <taxon>Burkholderiaceae</taxon>
        <taxon>Burkholderia</taxon>
        <taxon>Burkholderia cepacia complex</taxon>
    </lineage>
</organism>
<gene>
    <name evidence="1" type="primary">rplN</name>
    <name type="ordered locus">Bcep18194_A3457</name>
</gene>
<reference key="1">
    <citation type="submission" date="2005-10" db="EMBL/GenBank/DDBJ databases">
        <title>Complete sequence of chromosome 1 of Burkholderia sp. 383.</title>
        <authorList>
            <consortium name="US DOE Joint Genome Institute"/>
            <person name="Copeland A."/>
            <person name="Lucas S."/>
            <person name="Lapidus A."/>
            <person name="Barry K."/>
            <person name="Detter J.C."/>
            <person name="Glavina T."/>
            <person name="Hammon N."/>
            <person name="Israni S."/>
            <person name="Pitluck S."/>
            <person name="Chain P."/>
            <person name="Malfatti S."/>
            <person name="Shin M."/>
            <person name="Vergez L."/>
            <person name="Schmutz J."/>
            <person name="Larimer F."/>
            <person name="Land M."/>
            <person name="Kyrpides N."/>
            <person name="Lykidis A."/>
            <person name="Richardson P."/>
        </authorList>
    </citation>
    <scope>NUCLEOTIDE SEQUENCE [LARGE SCALE GENOMIC DNA]</scope>
    <source>
        <strain>ATCC 17760 / DSM 23089 / LMG 22485 / NCIMB 9086 / R18194 / 383</strain>
    </source>
</reference>